<keyword id="KW-0233">DNA recombination</keyword>
<keyword id="KW-0238">DNA-binding</keyword>
<keyword id="KW-1185">Reference proteome</keyword>
<keyword id="KW-0814">Transposable element</keyword>
<keyword id="KW-0815">Transposition</keyword>
<accession>O05086</accession>
<comment type="similarity">
    <text evidence="2">Belongs to the transposase IS3/IS150/IS904 family.</text>
</comment>
<proteinExistence type="inferred from homology"/>
<protein>
    <recommendedName>
        <fullName>Uncharacterized transposase-like protein HI_1721</fullName>
    </recommendedName>
</protein>
<name>Y1721_HAEIN</name>
<dbReference type="EMBL" id="L42023">
    <property type="protein sequence ID" value="AAC23367.1"/>
    <property type="molecule type" value="Genomic_DNA"/>
</dbReference>
<dbReference type="PIR" id="E64176">
    <property type="entry name" value="E64176"/>
</dbReference>
<dbReference type="RefSeq" id="NP_439862.2">
    <property type="nucleotide sequence ID" value="NC_000907.1"/>
</dbReference>
<dbReference type="SMR" id="O05086"/>
<dbReference type="STRING" id="71421.HI_1721"/>
<dbReference type="EnsemblBacteria" id="AAC23367">
    <property type="protein sequence ID" value="AAC23367"/>
    <property type="gene ID" value="HI_1721"/>
</dbReference>
<dbReference type="KEGG" id="hin:HI_1721"/>
<dbReference type="PATRIC" id="fig|71421.8.peg.1800"/>
<dbReference type="eggNOG" id="COG2801">
    <property type="taxonomic scope" value="Bacteria"/>
</dbReference>
<dbReference type="HOGENOM" id="CLU_027402_4_3_6"/>
<dbReference type="OrthoDB" id="5679417at2"/>
<dbReference type="PhylomeDB" id="O05086"/>
<dbReference type="Proteomes" id="UP000000579">
    <property type="component" value="Chromosome"/>
</dbReference>
<dbReference type="GO" id="GO:0003677">
    <property type="term" value="F:DNA binding"/>
    <property type="evidence" value="ECO:0007669"/>
    <property type="project" value="UniProtKB-KW"/>
</dbReference>
<dbReference type="GO" id="GO:0015074">
    <property type="term" value="P:DNA integration"/>
    <property type="evidence" value="ECO:0007669"/>
    <property type="project" value="InterPro"/>
</dbReference>
<dbReference type="GO" id="GO:0006310">
    <property type="term" value="P:DNA recombination"/>
    <property type="evidence" value="ECO:0007669"/>
    <property type="project" value="UniProtKB-KW"/>
</dbReference>
<dbReference type="GO" id="GO:0032196">
    <property type="term" value="P:transposition"/>
    <property type="evidence" value="ECO:0007669"/>
    <property type="project" value="UniProtKB-KW"/>
</dbReference>
<dbReference type="Gene3D" id="3.30.420.10">
    <property type="entry name" value="Ribonuclease H-like superfamily/Ribonuclease H"/>
    <property type="match status" value="1"/>
</dbReference>
<dbReference type="InterPro" id="IPR001584">
    <property type="entry name" value="Integrase_cat-core"/>
</dbReference>
<dbReference type="InterPro" id="IPR012337">
    <property type="entry name" value="RNaseH-like_sf"/>
</dbReference>
<dbReference type="InterPro" id="IPR036397">
    <property type="entry name" value="RNaseH_sf"/>
</dbReference>
<dbReference type="InterPro" id="IPR048020">
    <property type="entry name" value="Transpos_IS3"/>
</dbReference>
<dbReference type="InterPro" id="IPR050900">
    <property type="entry name" value="Transposase_IS3/IS150/IS904"/>
</dbReference>
<dbReference type="NCBIfam" id="NF033516">
    <property type="entry name" value="transpos_IS3"/>
    <property type="match status" value="1"/>
</dbReference>
<dbReference type="PANTHER" id="PTHR46889">
    <property type="entry name" value="TRANSPOSASE INSF FOR INSERTION SEQUENCE IS3B-RELATED"/>
    <property type="match status" value="1"/>
</dbReference>
<dbReference type="PANTHER" id="PTHR46889:SF4">
    <property type="entry name" value="TRANSPOSASE INSO FOR INSERTION SEQUENCE ELEMENT IS911B-RELATED"/>
    <property type="match status" value="1"/>
</dbReference>
<dbReference type="Pfam" id="PF00665">
    <property type="entry name" value="rve"/>
    <property type="match status" value="1"/>
</dbReference>
<dbReference type="Pfam" id="PF13333">
    <property type="entry name" value="rve_2"/>
    <property type="match status" value="1"/>
</dbReference>
<dbReference type="SUPFAM" id="SSF53098">
    <property type="entry name" value="Ribonuclease H-like"/>
    <property type="match status" value="1"/>
</dbReference>
<dbReference type="PROSITE" id="PS50994">
    <property type="entry name" value="INTEGRASE"/>
    <property type="match status" value="1"/>
</dbReference>
<organism>
    <name type="scientific">Haemophilus influenzae (strain ATCC 51907 / DSM 11121 / KW20 / Rd)</name>
    <dbReference type="NCBI Taxonomy" id="71421"/>
    <lineage>
        <taxon>Bacteria</taxon>
        <taxon>Pseudomonadati</taxon>
        <taxon>Pseudomonadota</taxon>
        <taxon>Gammaproteobacteria</taxon>
        <taxon>Pasteurellales</taxon>
        <taxon>Pasteurellaceae</taxon>
        <taxon>Haemophilus</taxon>
    </lineage>
</organism>
<reference key="1">
    <citation type="journal article" date="1995" name="Science">
        <title>Whole-genome random sequencing and assembly of Haemophilus influenzae Rd.</title>
        <authorList>
            <person name="Fleischmann R.D."/>
            <person name="Adams M.D."/>
            <person name="White O."/>
            <person name="Clayton R.A."/>
            <person name="Kirkness E.F."/>
            <person name="Kerlavage A.R."/>
            <person name="Bult C.J."/>
            <person name="Tomb J.-F."/>
            <person name="Dougherty B.A."/>
            <person name="Merrick J.M."/>
            <person name="McKenney K."/>
            <person name="Sutton G.G."/>
            <person name="FitzHugh W."/>
            <person name="Fields C.A."/>
            <person name="Gocayne J.D."/>
            <person name="Scott J.D."/>
            <person name="Shirley R."/>
            <person name="Liu L.-I."/>
            <person name="Glodek A."/>
            <person name="Kelley J.M."/>
            <person name="Weidman J.F."/>
            <person name="Phillips C.A."/>
            <person name="Spriggs T."/>
            <person name="Hedblom E."/>
            <person name="Cotton M.D."/>
            <person name="Utterback T.R."/>
            <person name="Hanna M.C."/>
            <person name="Nguyen D.T."/>
            <person name="Saudek D.M."/>
            <person name="Brandon R.C."/>
            <person name="Fine L.D."/>
            <person name="Fritchman J.L."/>
            <person name="Fuhrmann J.L."/>
            <person name="Geoghagen N.S.M."/>
            <person name="Gnehm C.L."/>
            <person name="McDonald L.A."/>
            <person name="Small K.V."/>
            <person name="Fraser C.M."/>
            <person name="Smith H.O."/>
            <person name="Venter J.C."/>
        </authorList>
    </citation>
    <scope>NUCLEOTIDE SEQUENCE [LARGE SCALE GENOMIC DNA]</scope>
    <source>
        <strain>ATCC 51907 / DSM 11121 / KW20 / Rd</strain>
    </source>
</reference>
<gene>
    <name type="ordered locus">HI_1721</name>
</gene>
<sequence>MTFKLRETIKINHKKVQRIMQWLGLKGKCKTQKYRSYQGEVGHIADNLLQRDFTATQPNEKWTTDITEFKCAEGKLYLSPIKDLFNNEIIAYDLARSPNFEQITRMMKQAVARLEGAKPILHSDQGWQYQMIGYQNILRENGIQQSMSRKGNCLYNSAMESFFGRLKTECYYGKRFETFEQLEKTIHEYIHYYNHERIQGKLKGLSPVNYRTQSLN</sequence>
<evidence type="ECO:0000255" key="1">
    <source>
        <dbReference type="PROSITE-ProRule" id="PRU00457"/>
    </source>
</evidence>
<evidence type="ECO:0000305" key="2"/>
<feature type="chain" id="PRO_0000075487" description="Uncharacterized transposase-like protein HI_1721">
    <location>
        <begin position="1"/>
        <end position="216"/>
    </location>
</feature>
<feature type="domain" description="Integrase catalytic" evidence="1">
    <location>
        <begin position="54"/>
        <end position="215"/>
    </location>
</feature>